<organism>
    <name type="scientific">Capsicum chinense</name>
    <name type="common">Scotch bonnet</name>
    <name type="synonym">Bonnet pepper</name>
    <dbReference type="NCBI Taxonomy" id="80379"/>
    <lineage>
        <taxon>Eukaryota</taxon>
        <taxon>Viridiplantae</taxon>
        <taxon>Streptophyta</taxon>
        <taxon>Embryophyta</taxon>
        <taxon>Tracheophyta</taxon>
        <taxon>Spermatophyta</taxon>
        <taxon>Magnoliopsida</taxon>
        <taxon>eudicotyledons</taxon>
        <taxon>Gunneridae</taxon>
        <taxon>Pentapetalae</taxon>
        <taxon>asterids</taxon>
        <taxon>lamiids</taxon>
        <taxon>Solanales</taxon>
        <taxon>Solanaceae</taxon>
        <taxon>Solanoideae</taxon>
        <taxon>Capsiceae</taxon>
        <taxon>Capsicum</taxon>
    </lineage>
</organism>
<dbReference type="EC" id="3.2.1.1"/>
<dbReference type="GO" id="GO:0004556">
    <property type="term" value="F:alpha-amylase activity"/>
    <property type="evidence" value="ECO:0007669"/>
    <property type="project" value="UniProtKB-EC"/>
</dbReference>
<dbReference type="GO" id="GO:0046872">
    <property type="term" value="F:metal ion binding"/>
    <property type="evidence" value="ECO:0007669"/>
    <property type="project" value="UniProtKB-KW"/>
</dbReference>
<comment type="catalytic activity">
    <reaction>
        <text>Endohydrolysis of (1-&gt;4)-alpha-D-glucosidic linkages in polysaccharides containing three or more (1-&gt;4)-alpha-linked D-glucose units.</text>
        <dbReference type="EC" id="3.2.1.1"/>
    </reaction>
</comment>
<comment type="cofactor">
    <cofactor evidence="1">
        <name>Ca(2+)</name>
        <dbReference type="ChEBI" id="CHEBI:29108"/>
    </cofactor>
    <text evidence="1">Binds 3 Ca(2+) ions per subunit.</text>
</comment>
<comment type="subunit">
    <text evidence="1">Monomer.</text>
</comment>
<comment type="similarity">
    <text evidence="2">Belongs to the glycosyl hydrolase 13 family.</text>
</comment>
<feature type="chain" id="PRO_0000362984" description="Alpha-amylase 2">
    <location>
        <begin position="1" status="less than"/>
        <end position="8" status="greater than"/>
    </location>
</feature>
<feature type="unsure residue" description="M or F">
    <location>
        <position position="1"/>
    </location>
</feature>
<feature type="unsure residue" description="F or M">
    <location>
        <position position="4"/>
    </location>
</feature>
<feature type="unsure residue" description="K or Q">
    <location>
        <position position="8"/>
    </location>
</feature>
<feature type="non-terminal residue">
    <location>
        <position position="1"/>
    </location>
</feature>
<feature type="non-terminal residue">
    <location>
        <position position="8"/>
    </location>
</feature>
<proteinExistence type="evidence at protein level"/>
<evidence type="ECO:0000250" key="1">
    <source>
        <dbReference type="UniProtKB" id="P04063"/>
    </source>
</evidence>
<evidence type="ECO:0000255" key="2"/>
<evidence type="ECO:0000305" key="3"/>
<reference evidence="3" key="1">
    <citation type="submission" date="2008-07" db="UniProtKB">
        <authorList>
            <person name="Sabater Jara A.B."/>
            <person name="Almagro L."/>
            <person name="Pedreno M.A."/>
        </authorList>
    </citation>
    <scope>PROTEIN SEQUENCE</scope>
</reference>
<protein>
    <recommendedName>
        <fullName evidence="1">Alpha-amylase 2</fullName>
        <ecNumber>3.2.1.1</ecNumber>
    </recommendedName>
    <alternativeName>
        <fullName evidence="1">1,4-alpha-D-glucan glucanohydrolase</fullName>
    </alternativeName>
</protein>
<name>AMY2_CAPCH</name>
<keyword id="KW-0106">Calcium</keyword>
<keyword id="KW-0119">Carbohydrate metabolism</keyword>
<keyword id="KW-0903">Direct protein sequencing</keyword>
<keyword id="KW-0326">Glycosidase</keyword>
<keyword id="KW-0378">Hydrolase</keyword>
<keyword id="KW-0479">Metal-binding</keyword>
<accession>P86088</accession>
<sequence length="8" mass="1007">MWPFPSDK</sequence>